<reference key="1">
    <citation type="journal article" date="2009" name="Vaccine">
        <title>Whole genome sequence analysis of Mycobacterium bovis bacillus Calmette-Guerin (BCG) Tokyo 172: a comparative study of BCG vaccine substrains.</title>
        <authorList>
            <person name="Seki M."/>
            <person name="Honda I."/>
            <person name="Fujita I."/>
            <person name="Yano I."/>
            <person name="Yamamoto S."/>
            <person name="Koyama A."/>
        </authorList>
    </citation>
    <scope>NUCLEOTIDE SEQUENCE [LARGE SCALE GENOMIC DNA]</scope>
    <source>
        <strain>BCG / Tokyo 172 / ATCC 35737 / TMC 1019</strain>
    </source>
</reference>
<dbReference type="EC" id="2.3.1.234" evidence="1"/>
<dbReference type="EMBL" id="AP010918">
    <property type="protein sequence ID" value="BAH27761.1"/>
    <property type="molecule type" value="Genomic_DNA"/>
</dbReference>
<dbReference type="RefSeq" id="WP_003900052.1">
    <property type="nucleotide sequence ID" value="NZ_CP014566.1"/>
</dbReference>
<dbReference type="SMR" id="C1AHN2"/>
<dbReference type="KEGG" id="mbt:JTY_3489"/>
<dbReference type="HOGENOM" id="CLU_023208_0_2_11"/>
<dbReference type="GO" id="GO:0005737">
    <property type="term" value="C:cytoplasm"/>
    <property type="evidence" value="ECO:0007669"/>
    <property type="project" value="UniProtKB-SubCell"/>
</dbReference>
<dbReference type="GO" id="GO:0005506">
    <property type="term" value="F:iron ion binding"/>
    <property type="evidence" value="ECO:0007669"/>
    <property type="project" value="UniProtKB-UniRule"/>
</dbReference>
<dbReference type="GO" id="GO:0061711">
    <property type="term" value="F:N(6)-L-threonylcarbamoyladenine synthase activity"/>
    <property type="evidence" value="ECO:0007669"/>
    <property type="project" value="UniProtKB-EC"/>
</dbReference>
<dbReference type="GO" id="GO:0002949">
    <property type="term" value="P:tRNA threonylcarbamoyladenosine modification"/>
    <property type="evidence" value="ECO:0007669"/>
    <property type="project" value="UniProtKB-UniRule"/>
</dbReference>
<dbReference type="CDD" id="cd24133">
    <property type="entry name" value="ASKHA_NBD_TsaD_bac"/>
    <property type="match status" value="1"/>
</dbReference>
<dbReference type="FunFam" id="3.30.420.40:FF:000012">
    <property type="entry name" value="tRNA N6-adenosine threonylcarbamoyltransferase"/>
    <property type="match status" value="1"/>
</dbReference>
<dbReference type="FunFam" id="3.30.420.40:FF:000040">
    <property type="entry name" value="tRNA N6-adenosine threonylcarbamoyltransferase"/>
    <property type="match status" value="1"/>
</dbReference>
<dbReference type="Gene3D" id="3.30.420.40">
    <property type="match status" value="2"/>
</dbReference>
<dbReference type="HAMAP" id="MF_01445">
    <property type="entry name" value="TsaD"/>
    <property type="match status" value="1"/>
</dbReference>
<dbReference type="InterPro" id="IPR043129">
    <property type="entry name" value="ATPase_NBD"/>
</dbReference>
<dbReference type="InterPro" id="IPR000905">
    <property type="entry name" value="Gcp-like_dom"/>
</dbReference>
<dbReference type="InterPro" id="IPR017861">
    <property type="entry name" value="KAE1/TsaD"/>
</dbReference>
<dbReference type="InterPro" id="IPR017860">
    <property type="entry name" value="Peptidase_M22_CS"/>
</dbReference>
<dbReference type="InterPro" id="IPR022450">
    <property type="entry name" value="TsaD"/>
</dbReference>
<dbReference type="NCBIfam" id="TIGR00329">
    <property type="entry name" value="gcp_kae1"/>
    <property type="match status" value="1"/>
</dbReference>
<dbReference type="NCBIfam" id="TIGR03723">
    <property type="entry name" value="T6A_TsaD_YgjD"/>
    <property type="match status" value="1"/>
</dbReference>
<dbReference type="PANTHER" id="PTHR11735">
    <property type="entry name" value="TRNA N6-ADENOSINE THREONYLCARBAMOYLTRANSFERASE"/>
    <property type="match status" value="1"/>
</dbReference>
<dbReference type="PANTHER" id="PTHR11735:SF6">
    <property type="entry name" value="TRNA N6-ADENOSINE THREONYLCARBAMOYLTRANSFERASE, MITOCHONDRIAL"/>
    <property type="match status" value="1"/>
</dbReference>
<dbReference type="Pfam" id="PF00814">
    <property type="entry name" value="TsaD"/>
    <property type="match status" value="1"/>
</dbReference>
<dbReference type="PRINTS" id="PR00789">
    <property type="entry name" value="OSIALOPTASE"/>
</dbReference>
<dbReference type="SUPFAM" id="SSF53067">
    <property type="entry name" value="Actin-like ATPase domain"/>
    <property type="match status" value="2"/>
</dbReference>
<dbReference type="PROSITE" id="PS01016">
    <property type="entry name" value="GLYCOPROTEASE"/>
    <property type="match status" value="1"/>
</dbReference>
<accession>C1AHN2</accession>
<evidence type="ECO:0000255" key="1">
    <source>
        <dbReference type="HAMAP-Rule" id="MF_01445"/>
    </source>
</evidence>
<evidence type="ECO:0000256" key="2">
    <source>
        <dbReference type="SAM" id="MobiDB-lite"/>
    </source>
</evidence>
<organism>
    <name type="scientific">Mycobacterium bovis (strain BCG / Tokyo 172 / ATCC 35737 / TMC 1019)</name>
    <dbReference type="NCBI Taxonomy" id="561275"/>
    <lineage>
        <taxon>Bacteria</taxon>
        <taxon>Bacillati</taxon>
        <taxon>Actinomycetota</taxon>
        <taxon>Actinomycetes</taxon>
        <taxon>Mycobacteriales</taxon>
        <taxon>Mycobacteriaceae</taxon>
        <taxon>Mycobacterium</taxon>
        <taxon>Mycobacterium tuberculosis complex</taxon>
    </lineage>
</organism>
<proteinExistence type="inferred from homology"/>
<comment type="function">
    <text evidence="1">Required for the formation of a threonylcarbamoyl group on adenosine at position 37 (t(6)A37) in tRNAs that read codons beginning with adenine. Is involved in the transfer of the threonylcarbamoyl moiety of threonylcarbamoyl-AMP (TC-AMP) to the N6 group of A37, together with TsaE and TsaB. TsaD likely plays a direct catalytic role in this reaction.</text>
</comment>
<comment type="catalytic activity">
    <reaction evidence="1">
        <text>L-threonylcarbamoyladenylate + adenosine(37) in tRNA = N(6)-L-threonylcarbamoyladenosine(37) in tRNA + AMP + H(+)</text>
        <dbReference type="Rhea" id="RHEA:37059"/>
        <dbReference type="Rhea" id="RHEA-COMP:10162"/>
        <dbReference type="Rhea" id="RHEA-COMP:10163"/>
        <dbReference type="ChEBI" id="CHEBI:15378"/>
        <dbReference type="ChEBI" id="CHEBI:73682"/>
        <dbReference type="ChEBI" id="CHEBI:74411"/>
        <dbReference type="ChEBI" id="CHEBI:74418"/>
        <dbReference type="ChEBI" id="CHEBI:456215"/>
        <dbReference type="EC" id="2.3.1.234"/>
    </reaction>
</comment>
<comment type="cofactor">
    <cofactor evidence="1">
        <name>Fe(2+)</name>
        <dbReference type="ChEBI" id="CHEBI:29033"/>
    </cofactor>
    <text evidence="1">Binds 1 Fe(2+) ion per subunit.</text>
</comment>
<comment type="subcellular location">
    <subcellularLocation>
        <location evidence="1">Cytoplasm</location>
    </subcellularLocation>
</comment>
<comment type="similarity">
    <text evidence="1">Belongs to the KAE1 / TsaD family.</text>
</comment>
<protein>
    <recommendedName>
        <fullName evidence="1">tRNA N6-adenosine threonylcarbamoyltransferase</fullName>
        <ecNumber evidence="1">2.3.1.234</ecNumber>
    </recommendedName>
    <alternativeName>
        <fullName evidence="1">N6-L-threonylcarbamoyladenine synthase</fullName>
        <shortName evidence="1">t(6)A synthase</shortName>
    </alternativeName>
    <alternativeName>
        <fullName evidence="1">t(6)A37 threonylcarbamoyladenosine biosynthesis protein TsaD</fullName>
    </alternativeName>
    <alternativeName>
        <fullName evidence="1">tRNA threonylcarbamoyladenosine biosynthesis protein TsaD</fullName>
    </alternativeName>
</protein>
<feature type="chain" id="PRO_1000184972" description="tRNA N6-adenosine threonylcarbamoyltransferase">
    <location>
        <begin position="1"/>
        <end position="344"/>
    </location>
</feature>
<feature type="region of interest" description="Disordered" evidence="2">
    <location>
        <begin position="325"/>
        <end position="344"/>
    </location>
</feature>
<feature type="binding site" evidence="1">
    <location>
        <position position="114"/>
    </location>
    <ligand>
        <name>Fe cation</name>
        <dbReference type="ChEBI" id="CHEBI:24875"/>
    </ligand>
</feature>
<feature type="binding site" evidence="1">
    <location>
        <position position="118"/>
    </location>
    <ligand>
        <name>Fe cation</name>
        <dbReference type="ChEBI" id="CHEBI:24875"/>
    </ligand>
</feature>
<feature type="binding site" evidence="1">
    <location>
        <begin position="136"/>
        <end position="140"/>
    </location>
    <ligand>
        <name>substrate</name>
    </ligand>
</feature>
<feature type="binding site" evidence="1">
    <location>
        <position position="170"/>
    </location>
    <ligand>
        <name>substrate</name>
    </ligand>
</feature>
<feature type="binding site" evidence="1">
    <location>
        <position position="183"/>
    </location>
    <ligand>
        <name>substrate</name>
    </ligand>
</feature>
<feature type="binding site" evidence="1">
    <location>
        <position position="187"/>
    </location>
    <ligand>
        <name>substrate</name>
    </ligand>
</feature>
<feature type="binding site" evidence="1">
    <location>
        <position position="278"/>
    </location>
    <ligand>
        <name>substrate</name>
    </ligand>
</feature>
<feature type="binding site" evidence="1">
    <location>
        <position position="306"/>
    </location>
    <ligand>
        <name>Fe cation</name>
        <dbReference type="ChEBI" id="CHEBI:24875"/>
    </ligand>
</feature>
<sequence length="344" mass="35091">MTTVLGIETSCDETGVGIARLDPDGTVTLLADEVASSVDEHVRFGGVVPEIASRAHLEALGPAMRRALAAAGLKQPDIVAATIGPGLAGALLVGVAAAKAYSAAWGVPFYAVNHLGGHLAADVYEHGPLPECVALLVSGGHTHLLHVRSLGEPIIELGSTVDDAAGEAYDKVARLLGLGYPGGKALDDLARTGDRDAIVFPRGMSGPADDRYAFSFSGLKTAVARYVESHAADPGFRTADIAAGFQEAVADVLTMKAVRAATALGVSTLLIAGGVAANSRLRELATQRCGEAGRTLRIPSPRLCTDNGAMIAAFAAQLVAAGAPPSPLDVPSDPGLPVMQGQVR</sequence>
<name>TSAD_MYCBT</name>
<keyword id="KW-0012">Acyltransferase</keyword>
<keyword id="KW-0963">Cytoplasm</keyword>
<keyword id="KW-0408">Iron</keyword>
<keyword id="KW-0479">Metal-binding</keyword>
<keyword id="KW-0808">Transferase</keyword>
<keyword id="KW-0819">tRNA processing</keyword>
<gene>
    <name evidence="1" type="primary">tsaD</name>
    <name type="synonym">gcp</name>
    <name type="ordered locus">JTY_3489</name>
</gene>